<feature type="chain" id="PRO_0000319854" description="Uncharacterized protein ORF5">
    <location>
        <begin position="1"/>
        <end position="101"/>
    </location>
</feature>
<keyword id="KW-1185">Reference proteome</keyword>
<organismHost>
    <name type="scientific">Gracula</name>
    <dbReference type="NCBI Taxonomy" id="116991"/>
</organismHost>
<organismHost>
    <name type="scientific">Psittaciformes</name>
    <dbReference type="NCBI Taxonomy" id="9223"/>
</organismHost>
<dbReference type="EMBL" id="AF080560">
    <property type="protein sequence ID" value="AAC69865.1"/>
    <property type="molecule type" value="Genomic_DNA"/>
</dbReference>
<dbReference type="Proteomes" id="UP000007454">
    <property type="component" value="Genome"/>
</dbReference>
<dbReference type="InterPro" id="IPR007772">
    <property type="entry name" value="BFDV_Orf5"/>
</dbReference>
<dbReference type="Pfam" id="PF05080">
    <property type="entry name" value="DUF681"/>
    <property type="match status" value="1"/>
</dbReference>
<gene>
    <name type="ORF">ORF5</name>
</gene>
<accession>Q9YUD2</accession>
<sequence>MGGAYITSRYWLVPAHVTSRLRLTSFTGHRGVARVDGPMSSLGLNIIKCAVNGGMDMTGKMSSSWTIFMGGYLIARCSASATVIHIKCQSRALLWSLPARG</sequence>
<proteinExistence type="predicted"/>
<name>ORF5_BFDV</name>
<reference key="1">
    <citation type="journal article" date="1998" name="Virology">
        <title>Psittacine beak and feather disease virus nucleotide sequence analysis and its relationship to porcine circovirus, plant circoviruses, and chicken anaemia virus.</title>
        <authorList>
            <person name="Bassami M.R."/>
            <person name="Berryman D."/>
            <person name="Wilcox G.E."/>
            <person name="Raidal S.R."/>
        </authorList>
    </citation>
    <scope>NUCLEOTIDE SEQUENCE [GENOMIC DNA]</scope>
</reference>
<organism>
    <name type="scientific">Beak and feather disease virus</name>
    <name type="common">BFDV</name>
    <dbReference type="NCBI Taxonomy" id="77856"/>
    <lineage>
        <taxon>Viruses</taxon>
        <taxon>Monodnaviria</taxon>
        <taxon>Shotokuvirae</taxon>
        <taxon>Cressdnaviricota</taxon>
        <taxon>Arfiviricetes</taxon>
        <taxon>Cirlivirales</taxon>
        <taxon>Circoviridae</taxon>
        <taxon>Circovirus</taxon>
        <taxon>Circovirus parrot</taxon>
    </lineage>
</organism>
<protein>
    <recommendedName>
        <fullName>Uncharacterized protein ORF5</fullName>
    </recommendedName>
</protein>